<dbReference type="EC" id="1.4.4.2" evidence="1"/>
<dbReference type="EMBL" id="CP000853">
    <property type="protein sequence ID" value="ABW17638.1"/>
    <property type="molecule type" value="Genomic_DNA"/>
</dbReference>
<dbReference type="RefSeq" id="WP_012157953.1">
    <property type="nucleotide sequence ID" value="NC_009922.1"/>
</dbReference>
<dbReference type="SMR" id="A8MEG7"/>
<dbReference type="STRING" id="350688.Clos_0068"/>
<dbReference type="KEGG" id="aoe:Clos_0068"/>
<dbReference type="eggNOG" id="COG1003">
    <property type="taxonomic scope" value="Bacteria"/>
</dbReference>
<dbReference type="HOGENOM" id="CLU_004620_5_0_9"/>
<dbReference type="OrthoDB" id="9801272at2"/>
<dbReference type="Proteomes" id="UP000000269">
    <property type="component" value="Chromosome"/>
</dbReference>
<dbReference type="GO" id="GO:0005829">
    <property type="term" value="C:cytosol"/>
    <property type="evidence" value="ECO:0007669"/>
    <property type="project" value="TreeGrafter"/>
</dbReference>
<dbReference type="GO" id="GO:0005960">
    <property type="term" value="C:glycine cleavage complex"/>
    <property type="evidence" value="ECO:0007669"/>
    <property type="project" value="TreeGrafter"/>
</dbReference>
<dbReference type="GO" id="GO:0016594">
    <property type="term" value="F:glycine binding"/>
    <property type="evidence" value="ECO:0007669"/>
    <property type="project" value="TreeGrafter"/>
</dbReference>
<dbReference type="GO" id="GO:0004375">
    <property type="term" value="F:glycine dehydrogenase (decarboxylating) activity"/>
    <property type="evidence" value="ECO:0007669"/>
    <property type="project" value="UniProtKB-EC"/>
</dbReference>
<dbReference type="GO" id="GO:0030170">
    <property type="term" value="F:pyridoxal phosphate binding"/>
    <property type="evidence" value="ECO:0007669"/>
    <property type="project" value="TreeGrafter"/>
</dbReference>
<dbReference type="GO" id="GO:0019464">
    <property type="term" value="P:glycine decarboxylation via glycine cleavage system"/>
    <property type="evidence" value="ECO:0007669"/>
    <property type="project" value="UniProtKB-UniRule"/>
</dbReference>
<dbReference type="CDD" id="cd00613">
    <property type="entry name" value="GDC-P"/>
    <property type="match status" value="1"/>
</dbReference>
<dbReference type="FunFam" id="3.40.640.10:FF:000034">
    <property type="entry name" value="Probable glycine dehydrogenase (decarboxylating) subunit 2"/>
    <property type="match status" value="1"/>
</dbReference>
<dbReference type="FunFam" id="3.90.1150.10:FF:000014">
    <property type="entry name" value="Probable glycine dehydrogenase (decarboxylating) subunit 2"/>
    <property type="match status" value="1"/>
</dbReference>
<dbReference type="Gene3D" id="6.20.440.10">
    <property type="match status" value="1"/>
</dbReference>
<dbReference type="Gene3D" id="3.90.1150.10">
    <property type="entry name" value="Aspartate Aminotransferase, domain 1"/>
    <property type="match status" value="1"/>
</dbReference>
<dbReference type="Gene3D" id="3.40.640.10">
    <property type="entry name" value="Type I PLP-dependent aspartate aminotransferase-like (Major domain)"/>
    <property type="match status" value="1"/>
</dbReference>
<dbReference type="HAMAP" id="MF_00713">
    <property type="entry name" value="GcvPB"/>
    <property type="match status" value="1"/>
</dbReference>
<dbReference type="InterPro" id="IPR023012">
    <property type="entry name" value="GcvPB"/>
</dbReference>
<dbReference type="InterPro" id="IPR049316">
    <property type="entry name" value="GDC-P_C"/>
</dbReference>
<dbReference type="InterPro" id="IPR049315">
    <property type="entry name" value="GDC-P_N"/>
</dbReference>
<dbReference type="InterPro" id="IPR020581">
    <property type="entry name" value="GDC_P"/>
</dbReference>
<dbReference type="InterPro" id="IPR015424">
    <property type="entry name" value="PyrdxlP-dep_Trfase"/>
</dbReference>
<dbReference type="InterPro" id="IPR015421">
    <property type="entry name" value="PyrdxlP-dep_Trfase_major"/>
</dbReference>
<dbReference type="InterPro" id="IPR015422">
    <property type="entry name" value="PyrdxlP-dep_Trfase_small"/>
</dbReference>
<dbReference type="NCBIfam" id="NF003346">
    <property type="entry name" value="PRK04366.1"/>
    <property type="match status" value="1"/>
</dbReference>
<dbReference type="PANTHER" id="PTHR11773:SF1">
    <property type="entry name" value="GLYCINE DEHYDROGENASE (DECARBOXYLATING), MITOCHONDRIAL"/>
    <property type="match status" value="1"/>
</dbReference>
<dbReference type="PANTHER" id="PTHR11773">
    <property type="entry name" value="GLYCINE DEHYDROGENASE, DECARBOXYLATING"/>
    <property type="match status" value="1"/>
</dbReference>
<dbReference type="Pfam" id="PF21478">
    <property type="entry name" value="GcvP2_C"/>
    <property type="match status" value="1"/>
</dbReference>
<dbReference type="Pfam" id="PF02347">
    <property type="entry name" value="GDC-P"/>
    <property type="match status" value="1"/>
</dbReference>
<dbReference type="SUPFAM" id="SSF53383">
    <property type="entry name" value="PLP-dependent transferases"/>
    <property type="match status" value="1"/>
</dbReference>
<protein>
    <recommendedName>
        <fullName evidence="1">Probable glycine dehydrogenase (decarboxylating) subunit 2</fullName>
        <ecNumber evidence="1">1.4.4.2</ecNumber>
    </recommendedName>
    <alternativeName>
        <fullName evidence="1">Glycine cleavage system P-protein subunit 2</fullName>
    </alternativeName>
    <alternativeName>
        <fullName evidence="1">Glycine decarboxylase subunit 2</fullName>
    </alternativeName>
    <alternativeName>
        <fullName evidence="1">Glycine dehydrogenase (aminomethyl-transferring) subunit 2</fullName>
    </alternativeName>
</protein>
<sequence>MKSDYNKLIFEISKEGRKAYSLPKCDVEEVNLESLIPKEFLSDKELDLPEVSEVDVIRHYTQLSNKNYGVDTGFYPLGSCTMKYNPKLNEDMAVLPGFANIHPYQPEETVQGALELMYKLDKMLAEVAGMERMTLQPAAGAHGELVGLMVIKAYHKKRGDLKRTKIIIPDSAHGTNPASAAVAGFDVVEIKSNPDGSVNIDSLKSALSDEIAGLMLTNPSTLGLFETNIKQIADLVHDAGGLLYYDGANMNAIMGVTRPGDMGFDVIHYNIHKTFSTPHGGGGPGSGPVGVRKDLVEFLPSPVIEKKGEEYVLDYDRPYSIGKIKSFYGHFGILVRAYTYILSYGPALREVSEKAVLNANYMMHKLKEKYYLPIEQVCKHEFVLGGLNEDILGVSTLDIAKRLLDYGYHPPTIYFPLIVNEAMMIEPTETESVETLDQFIDALNKIADEAKETPELLKNAPHHTHVRRIDEAKAARNLIVKWEREQ</sequence>
<accession>A8MEG7</accession>
<gene>
    <name evidence="1" type="primary">gcvPB</name>
    <name type="ordered locus">Clos_0068</name>
</gene>
<keyword id="KW-0560">Oxidoreductase</keyword>
<keyword id="KW-0663">Pyridoxal phosphate</keyword>
<keyword id="KW-1185">Reference proteome</keyword>
<organism>
    <name type="scientific">Alkaliphilus oremlandii (strain OhILAs)</name>
    <name type="common">Clostridium oremlandii (strain OhILAs)</name>
    <dbReference type="NCBI Taxonomy" id="350688"/>
    <lineage>
        <taxon>Bacteria</taxon>
        <taxon>Bacillati</taxon>
        <taxon>Bacillota</taxon>
        <taxon>Clostridia</taxon>
        <taxon>Peptostreptococcales</taxon>
        <taxon>Natronincolaceae</taxon>
        <taxon>Alkaliphilus</taxon>
    </lineage>
</organism>
<proteinExistence type="inferred from homology"/>
<comment type="function">
    <text evidence="1">The glycine cleavage system catalyzes the degradation of glycine. The P protein binds the alpha-amino group of glycine through its pyridoxal phosphate cofactor; CO(2) is released and the remaining methylamine moiety is then transferred to the lipoamide cofactor of the H protein.</text>
</comment>
<comment type="catalytic activity">
    <reaction evidence="1">
        <text>N(6)-[(R)-lipoyl]-L-lysyl-[glycine-cleavage complex H protein] + glycine + H(+) = N(6)-[(R)-S(8)-aminomethyldihydrolipoyl]-L-lysyl-[glycine-cleavage complex H protein] + CO2</text>
        <dbReference type="Rhea" id="RHEA:24304"/>
        <dbReference type="Rhea" id="RHEA-COMP:10494"/>
        <dbReference type="Rhea" id="RHEA-COMP:10495"/>
        <dbReference type="ChEBI" id="CHEBI:15378"/>
        <dbReference type="ChEBI" id="CHEBI:16526"/>
        <dbReference type="ChEBI" id="CHEBI:57305"/>
        <dbReference type="ChEBI" id="CHEBI:83099"/>
        <dbReference type="ChEBI" id="CHEBI:83143"/>
        <dbReference type="EC" id="1.4.4.2"/>
    </reaction>
</comment>
<comment type="cofactor">
    <cofactor evidence="1">
        <name>pyridoxal 5'-phosphate</name>
        <dbReference type="ChEBI" id="CHEBI:597326"/>
    </cofactor>
</comment>
<comment type="subunit">
    <text evidence="1">The glycine cleavage system is composed of four proteins: P, T, L and H. In this organism, the P 'protein' is a heterodimer of two subunits.</text>
</comment>
<comment type="similarity">
    <text evidence="1">Belongs to the GcvP family. C-terminal subunit subfamily.</text>
</comment>
<feature type="chain" id="PRO_1000062080" description="Probable glycine dehydrogenase (decarboxylating) subunit 2">
    <location>
        <begin position="1"/>
        <end position="486"/>
    </location>
</feature>
<feature type="modified residue" description="N6-(pyridoxal phosphate)lysine" evidence="1">
    <location>
        <position position="273"/>
    </location>
</feature>
<reference key="1">
    <citation type="submission" date="2007-10" db="EMBL/GenBank/DDBJ databases">
        <title>Complete genome of Alkaliphilus oremlandii OhILAs.</title>
        <authorList>
            <person name="Copeland A."/>
            <person name="Lucas S."/>
            <person name="Lapidus A."/>
            <person name="Barry K."/>
            <person name="Detter J.C."/>
            <person name="Glavina del Rio T."/>
            <person name="Hammon N."/>
            <person name="Israni S."/>
            <person name="Dalin E."/>
            <person name="Tice H."/>
            <person name="Pitluck S."/>
            <person name="Chain P."/>
            <person name="Malfatti S."/>
            <person name="Shin M."/>
            <person name="Vergez L."/>
            <person name="Schmutz J."/>
            <person name="Larimer F."/>
            <person name="Land M."/>
            <person name="Hauser L."/>
            <person name="Kyrpides N."/>
            <person name="Mikhailova N."/>
            <person name="Stolz J.F."/>
            <person name="Dawson A."/>
            <person name="Fisher E."/>
            <person name="Crable B."/>
            <person name="Perera E."/>
            <person name="Lisak J."/>
            <person name="Ranganathan M."/>
            <person name="Basu P."/>
            <person name="Richardson P."/>
        </authorList>
    </citation>
    <scope>NUCLEOTIDE SEQUENCE [LARGE SCALE GENOMIC DNA]</scope>
    <source>
        <strain>OhILAs</strain>
    </source>
</reference>
<name>GCSPB_ALKOO</name>
<evidence type="ECO:0000255" key="1">
    <source>
        <dbReference type="HAMAP-Rule" id="MF_00713"/>
    </source>
</evidence>